<keyword id="KW-0966">Cell projection</keyword>
<keyword id="KW-1267">Proteomics identification</keyword>
<keyword id="KW-1185">Reference proteome</keyword>
<proteinExistence type="evidence at protein level"/>
<name>CEP15_HUMAN</name>
<comment type="function">
    <text evidence="1">May play a role in ciliary assembly.</text>
</comment>
<comment type="subcellular location">
    <subcellularLocation>
        <location evidence="1">Cell projection</location>
        <location evidence="1">Cilium</location>
    </subcellularLocation>
    <text evidence="1">Locates at ciliary distal appendages.</text>
</comment>
<accession>Q9HBI5</accession>
<accession>B2R9U0</accession>
<protein>
    <recommendedName>
        <fullName evidence="2">Centrosomal protein 15</fullName>
    </recommendedName>
    <alternativeName>
        <fullName evidence="1">Centrosomal protein 15 kDa</fullName>
    </alternativeName>
</protein>
<sequence>MTSLFAQEIRLSKRHEEIVSQRLMLLQQMENKLGDQHTEKASQLQTVETAFKRNLSLLKDIEAAEKSLQTRIHPLPRPEVVSLETRYWASVEEYIPKWEQFLLGRAPYPFAVENQNEAENTIQNEAQR</sequence>
<organism>
    <name type="scientific">Homo sapiens</name>
    <name type="common">Human</name>
    <dbReference type="NCBI Taxonomy" id="9606"/>
    <lineage>
        <taxon>Eukaryota</taxon>
        <taxon>Metazoa</taxon>
        <taxon>Chordata</taxon>
        <taxon>Craniata</taxon>
        <taxon>Vertebrata</taxon>
        <taxon>Euteleostomi</taxon>
        <taxon>Mammalia</taxon>
        <taxon>Eutheria</taxon>
        <taxon>Euarchontoglires</taxon>
        <taxon>Primates</taxon>
        <taxon>Haplorrhini</taxon>
        <taxon>Catarrhini</taxon>
        <taxon>Hominidae</taxon>
        <taxon>Homo</taxon>
    </lineage>
</organism>
<feature type="chain" id="PRO_0000089388" description="Centrosomal protein 15">
    <location>
        <begin position="1"/>
        <end position="128"/>
    </location>
</feature>
<gene>
    <name evidence="2" type="primary">CEP15</name>
    <name type="ORF">C3orf14</name>
    <name type="ORF">HT021</name>
</gene>
<reference key="1">
    <citation type="journal article" date="2000" name="Proc. Natl. Acad. Sci. U.S.A.">
        <title>Gene expression profiling in the human hypothalamus-pituitary-adrenal axis and full-length cDNA cloning.</title>
        <authorList>
            <person name="Hu R.-M."/>
            <person name="Han Z.-G."/>
            <person name="Song H.-D."/>
            <person name="Peng Y.-D."/>
            <person name="Huang Q.-H."/>
            <person name="Ren S.-X."/>
            <person name="Gu Y.-J."/>
            <person name="Huang C.-H."/>
            <person name="Li Y.-B."/>
            <person name="Jiang C.-L."/>
            <person name="Fu G."/>
            <person name="Zhang Q.-H."/>
            <person name="Gu B.-W."/>
            <person name="Dai M."/>
            <person name="Mao Y.-F."/>
            <person name="Gao G.-F."/>
            <person name="Rong R."/>
            <person name="Ye M."/>
            <person name="Zhou J."/>
            <person name="Xu S.-H."/>
            <person name="Gu J."/>
            <person name="Shi J.-X."/>
            <person name="Jin W.-R."/>
            <person name="Zhang C.-K."/>
            <person name="Wu T.-M."/>
            <person name="Huang G.-Y."/>
            <person name="Chen Z."/>
            <person name="Chen M.-D."/>
            <person name="Chen J.-L."/>
        </authorList>
    </citation>
    <scope>NUCLEOTIDE SEQUENCE [LARGE SCALE MRNA]</scope>
    <source>
        <tissue>Hypothalamus</tissue>
    </source>
</reference>
<reference key="2">
    <citation type="journal article" date="2004" name="Nat. Genet.">
        <title>Complete sequencing and characterization of 21,243 full-length human cDNAs.</title>
        <authorList>
            <person name="Ota T."/>
            <person name="Suzuki Y."/>
            <person name="Nishikawa T."/>
            <person name="Otsuki T."/>
            <person name="Sugiyama T."/>
            <person name="Irie R."/>
            <person name="Wakamatsu A."/>
            <person name="Hayashi K."/>
            <person name="Sato H."/>
            <person name="Nagai K."/>
            <person name="Kimura K."/>
            <person name="Makita H."/>
            <person name="Sekine M."/>
            <person name="Obayashi M."/>
            <person name="Nishi T."/>
            <person name="Shibahara T."/>
            <person name="Tanaka T."/>
            <person name="Ishii S."/>
            <person name="Yamamoto J."/>
            <person name="Saito K."/>
            <person name="Kawai Y."/>
            <person name="Isono Y."/>
            <person name="Nakamura Y."/>
            <person name="Nagahari K."/>
            <person name="Murakami K."/>
            <person name="Yasuda T."/>
            <person name="Iwayanagi T."/>
            <person name="Wagatsuma M."/>
            <person name="Shiratori A."/>
            <person name="Sudo H."/>
            <person name="Hosoiri T."/>
            <person name="Kaku Y."/>
            <person name="Kodaira H."/>
            <person name="Kondo H."/>
            <person name="Sugawara M."/>
            <person name="Takahashi M."/>
            <person name="Kanda K."/>
            <person name="Yokoi T."/>
            <person name="Furuya T."/>
            <person name="Kikkawa E."/>
            <person name="Omura Y."/>
            <person name="Abe K."/>
            <person name="Kamihara K."/>
            <person name="Katsuta N."/>
            <person name="Sato K."/>
            <person name="Tanikawa M."/>
            <person name="Yamazaki M."/>
            <person name="Ninomiya K."/>
            <person name="Ishibashi T."/>
            <person name="Yamashita H."/>
            <person name="Murakawa K."/>
            <person name="Fujimori K."/>
            <person name="Tanai H."/>
            <person name="Kimata M."/>
            <person name="Watanabe M."/>
            <person name="Hiraoka S."/>
            <person name="Chiba Y."/>
            <person name="Ishida S."/>
            <person name="Ono Y."/>
            <person name="Takiguchi S."/>
            <person name="Watanabe S."/>
            <person name="Yosida M."/>
            <person name="Hotuta T."/>
            <person name="Kusano J."/>
            <person name="Kanehori K."/>
            <person name="Takahashi-Fujii A."/>
            <person name="Hara H."/>
            <person name="Tanase T.-O."/>
            <person name="Nomura Y."/>
            <person name="Togiya S."/>
            <person name="Komai F."/>
            <person name="Hara R."/>
            <person name="Takeuchi K."/>
            <person name="Arita M."/>
            <person name="Imose N."/>
            <person name="Musashino K."/>
            <person name="Yuuki H."/>
            <person name="Oshima A."/>
            <person name="Sasaki N."/>
            <person name="Aotsuka S."/>
            <person name="Yoshikawa Y."/>
            <person name="Matsunawa H."/>
            <person name="Ichihara T."/>
            <person name="Shiohata N."/>
            <person name="Sano S."/>
            <person name="Moriya S."/>
            <person name="Momiyama H."/>
            <person name="Satoh N."/>
            <person name="Takami S."/>
            <person name="Terashima Y."/>
            <person name="Suzuki O."/>
            <person name="Nakagawa S."/>
            <person name="Senoh A."/>
            <person name="Mizoguchi H."/>
            <person name="Goto Y."/>
            <person name="Shimizu F."/>
            <person name="Wakebe H."/>
            <person name="Hishigaki H."/>
            <person name="Watanabe T."/>
            <person name="Sugiyama A."/>
            <person name="Takemoto M."/>
            <person name="Kawakami B."/>
            <person name="Yamazaki M."/>
            <person name="Watanabe K."/>
            <person name="Kumagai A."/>
            <person name="Itakura S."/>
            <person name="Fukuzumi Y."/>
            <person name="Fujimori Y."/>
            <person name="Komiyama M."/>
            <person name="Tashiro H."/>
            <person name="Tanigami A."/>
            <person name="Fujiwara T."/>
            <person name="Ono T."/>
            <person name="Yamada K."/>
            <person name="Fujii Y."/>
            <person name="Ozaki K."/>
            <person name="Hirao M."/>
            <person name="Ohmori Y."/>
            <person name="Kawabata A."/>
            <person name="Hikiji T."/>
            <person name="Kobatake N."/>
            <person name="Inagaki H."/>
            <person name="Ikema Y."/>
            <person name="Okamoto S."/>
            <person name="Okitani R."/>
            <person name="Kawakami T."/>
            <person name="Noguchi S."/>
            <person name="Itoh T."/>
            <person name="Shigeta K."/>
            <person name="Senba T."/>
            <person name="Matsumura K."/>
            <person name="Nakajima Y."/>
            <person name="Mizuno T."/>
            <person name="Morinaga M."/>
            <person name="Sasaki M."/>
            <person name="Togashi T."/>
            <person name="Oyama M."/>
            <person name="Hata H."/>
            <person name="Watanabe M."/>
            <person name="Komatsu T."/>
            <person name="Mizushima-Sugano J."/>
            <person name="Satoh T."/>
            <person name="Shirai Y."/>
            <person name="Takahashi Y."/>
            <person name="Nakagawa K."/>
            <person name="Okumura K."/>
            <person name="Nagase T."/>
            <person name="Nomura N."/>
            <person name="Kikuchi H."/>
            <person name="Masuho Y."/>
            <person name="Yamashita R."/>
            <person name="Nakai K."/>
            <person name="Yada T."/>
            <person name="Nakamura Y."/>
            <person name="Ohara O."/>
            <person name="Isogai T."/>
            <person name="Sugano S."/>
        </authorList>
    </citation>
    <scope>NUCLEOTIDE SEQUENCE [LARGE SCALE MRNA]</scope>
    <source>
        <tissue>Thalamus</tissue>
    </source>
</reference>
<reference key="3">
    <citation type="submission" date="2005-07" db="EMBL/GenBank/DDBJ databases">
        <authorList>
            <person name="Mural R.J."/>
            <person name="Istrail S."/>
            <person name="Sutton G.G."/>
            <person name="Florea L."/>
            <person name="Halpern A.L."/>
            <person name="Mobarry C.M."/>
            <person name="Lippert R."/>
            <person name="Walenz B."/>
            <person name="Shatkay H."/>
            <person name="Dew I."/>
            <person name="Miller J.R."/>
            <person name="Flanigan M.J."/>
            <person name="Edwards N.J."/>
            <person name="Bolanos R."/>
            <person name="Fasulo D."/>
            <person name="Halldorsson B.V."/>
            <person name="Hannenhalli S."/>
            <person name="Turner R."/>
            <person name="Yooseph S."/>
            <person name="Lu F."/>
            <person name="Nusskern D.R."/>
            <person name="Shue B.C."/>
            <person name="Zheng X.H."/>
            <person name="Zhong F."/>
            <person name="Delcher A.L."/>
            <person name="Huson D.H."/>
            <person name="Kravitz S.A."/>
            <person name="Mouchard L."/>
            <person name="Reinert K."/>
            <person name="Remington K.A."/>
            <person name="Clark A.G."/>
            <person name="Waterman M.S."/>
            <person name="Eichler E.E."/>
            <person name="Adams M.D."/>
            <person name="Hunkapiller M.W."/>
            <person name="Myers E.W."/>
            <person name="Venter J.C."/>
        </authorList>
    </citation>
    <scope>NUCLEOTIDE SEQUENCE [LARGE SCALE GENOMIC DNA]</scope>
</reference>
<reference key="4">
    <citation type="journal article" date="2004" name="Genome Res.">
        <title>The status, quality, and expansion of the NIH full-length cDNA project: the Mammalian Gene Collection (MGC).</title>
        <authorList>
            <consortium name="The MGC Project Team"/>
        </authorList>
    </citation>
    <scope>NUCLEOTIDE SEQUENCE [LARGE SCALE MRNA]</scope>
    <source>
        <tissue>Skin</tissue>
    </source>
</reference>
<evidence type="ECO:0000305" key="1"/>
<evidence type="ECO:0000312" key="2">
    <source>
        <dbReference type="HGNC" id="HGNC:25024"/>
    </source>
</evidence>
<dbReference type="EMBL" id="AF236158">
    <property type="protein sequence ID" value="AAG09750.1"/>
    <property type="molecule type" value="mRNA"/>
</dbReference>
<dbReference type="EMBL" id="AK313915">
    <property type="protein sequence ID" value="BAG36637.1"/>
    <property type="molecule type" value="mRNA"/>
</dbReference>
<dbReference type="EMBL" id="CH471055">
    <property type="protein sequence ID" value="EAW65400.1"/>
    <property type="molecule type" value="Genomic_DNA"/>
</dbReference>
<dbReference type="EMBL" id="BC017772">
    <property type="protein sequence ID" value="AAH17772.1"/>
    <property type="molecule type" value="mRNA"/>
</dbReference>
<dbReference type="CCDS" id="CCDS2896.1"/>
<dbReference type="RefSeq" id="NP_001278870.1">
    <property type="nucleotide sequence ID" value="NM_001291941.3"/>
</dbReference>
<dbReference type="RefSeq" id="NP_001278871.1">
    <property type="nucleotide sequence ID" value="NM_001291942.3"/>
</dbReference>
<dbReference type="RefSeq" id="NP_065736.1">
    <property type="nucleotide sequence ID" value="NM_020685.6"/>
</dbReference>
<dbReference type="RefSeq" id="XP_016862420.1">
    <property type="nucleotide sequence ID" value="XM_017006931.2"/>
</dbReference>
<dbReference type="RefSeq" id="XP_047304587.1">
    <property type="nucleotide sequence ID" value="XM_047448631.1"/>
</dbReference>
<dbReference type="RefSeq" id="XP_054203347.1">
    <property type="nucleotide sequence ID" value="XM_054347372.1"/>
</dbReference>
<dbReference type="RefSeq" id="XP_054203348.1">
    <property type="nucleotide sequence ID" value="XM_054347373.1"/>
</dbReference>
<dbReference type="SMR" id="Q9HBI5"/>
<dbReference type="BioGRID" id="121516">
    <property type="interactions" value="10"/>
</dbReference>
<dbReference type="FunCoup" id="Q9HBI5">
    <property type="interactions" value="85"/>
</dbReference>
<dbReference type="IntAct" id="Q9HBI5">
    <property type="interactions" value="9"/>
</dbReference>
<dbReference type="STRING" id="9606.ENSP00000418086"/>
<dbReference type="iPTMnet" id="Q9HBI5"/>
<dbReference type="PhosphoSitePlus" id="Q9HBI5"/>
<dbReference type="BioMuta" id="C3orf14"/>
<dbReference type="DMDM" id="68565304"/>
<dbReference type="jPOST" id="Q9HBI5"/>
<dbReference type="MassIVE" id="Q9HBI5"/>
<dbReference type="PaxDb" id="9606-ENSP00000418086"/>
<dbReference type="PeptideAtlas" id="Q9HBI5"/>
<dbReference type="ProteomicsDB" id="81561"/>
<dbReference type="Antibodypedia" id="54678">
    <property type="antibodies" value="61 antibodies from 9 providers"/>
</dbReference>
<dbReference type="DNASU" id="57415"/>
<dbReference type="Ensembl" id="ENST00000232519.9">
    <property type="protein sequence ID" value="ENSP00000232519.5"/>
    <property type="gene ID" value="ENSG00000114405.11"/>
</dbReference>
<dbReference type="Ensembl" id="ENST00000462069.6">
    <property type="protein sequence ID" value="ENSP00000419977.1"/>
    <property type="gene ID" value="ENSG00000114405.11"/>
</dbReference>
<dbReference type="Ensembl" id="ENST00000494481.5">
    <property type="protein sequence ID" value="ENSP00000418086.1"/>
    <property type="gene ID" value="ENSG00000114405.11"/>
</dbReference>
<dbReference type="Ensembl" id="ENST00000542214.2">
    <property type="protein sequence ID" value="ENSP00000438275.1"/>
    <property type="gene ID" value="ENSG00000114405.11"/>
</dbReference>
<dbReference type="GeneID" id="57415"/>
<dbReference type="KEGG" id="hsa:57415"/>
<dbReference type="MANE-Select" id="ENST00000462069.6">
    <property type="protein sequence ID" value="ENSP00000419977.1"/>
    <property type="RefSeq nucleotide sequence ID" value="NM_001291941.3"/>
    <property type="RefSeq protein sequence ID" value="NP_001278870.1"/>
</dbReference>
<dbReference type="UCSC" id="uc003dlf.4">
    <property type="organism name" value="human"/>
</dbReference>
<dbReference type="AGR" id="HGNC:25024"/>
<dbReference type="CTD" id="57415"/>
<dbReference type="DisGeNET" id="57415"/>
<dbReference type="GeneCards" id="CEP15"/>
<dbReference type="HGNC" id="HGNC:25024">
    <property type="gene designation" value="CEP15"/>
</dbReference>
<dbReference type="HPA" id="ENSG00000114405">
    <property type="expression patterns" value="Tissue enhanced (brain)"/>
</dbReference>
<dbReference type="neXtProt" id="NX_Q9HBI5"/>
<dbReference type="OpenTargets" id="ENSG00000114405"/>
<dbReference type="PharmGKB" id="PA134883066"/>
<dbReference type="VEuPathDB" id="HostDB:ENSG00000114405"/>
<dbReference type="eggNOG" id="ENOG502S7A9">
    <property type="taxonomic scope" value="Eukaryota"/>
</dbReference>
<dbReference type="GeneTree" id="ENSGT00390000005214"/>
<dbReference type="HOGENOM" id="CLU_133336_0_0_1"/>
<dbReference type="InParanoid" id="Q9HBI5"/>
<dbReference type="OMA" id="KEYIPKW"/>
<dbReference type="OrthoDB" id="9871079at2759"/>
<dbReference type="PAN-GO" id="Q9HBI5">
    <property type="GO annotations" value="0 GO annotations based on evolutionary models"/>
</dbReference>
<dbReference type="PhylomeDB" id="Q9HBI5"/>
<dbReference type="TreeFam" id="TF335879"/>
<dbReference type="PathwayCommons" id="Q9HBI5"/>
<dbReference type="SignaLink" id="Q9HBI5"/>
<dbReference type="BioGRID-ORCS" id="57415">
    <property type="hits" value="8 hits in 1118 CRISPR screens"/>
</dbReference>
<dbReference type="ChiTaRS" id="C3orf14">
    <property type="organism name" value="human"/>
</dbReference>
<dbReference type="GenomeRNAi" id="57415"/>
<dbReference type="Pharos" id="Q9HBI5">
    <property type="development level" value="Tdark"/>
</dbReference>
<dbReference type="PRO" id="PR:Q9HBI5"/>
<dbReference type="Proteomes" id="UP000005640">
    <property type="component" value="Chromosome 3"/>
</dbReference>
<dbReference type="RNAct" id="Q9HBI5">
    <property type="molecule type" value="protein"/>
</dbReference>
<dbReference type="Bgee" id="ENSG00000114405">
    <property type="expression patterns" value="Expressed in pons and 194 other cell types or tissues"/>
</dbReference>
<dbReference type="ExpressionAtlas" id="Q9HBI5">
    <property type="expression patterns" value="baseline and differential"/>
</dbReference>
<dbReference type="GO" id="GO:0005929">
    <property type="term" value="C:cilium"/>
    <property type="evidence" value="ECO:0007669"/>
    <property type="project" value="UniProtKB-SubCell"/>
</dbReference>
<dbReference type="InterPro" id="IPR028006">
    <property type="entry name" value="CEP15-like"/>
</dbReference>
<dbReference type="PANTHER" id="PTHR14286:SF2">
    <property type="entry name" value="CENTROSOMAL PROTEIN 15 KDA"/>
    <property type="match status" value="1"/>
</dbReference>
<dbReference type="PANTHER" id="PTHR14286">
    <property type="entry name" value="GENE, 49355-RELATED"/>
    <property type="match status" value="1"/>
</dbReference>
<dbReference type="Pfam" id="PF15134">
    <property type="entry name" value="CEP15-like"/>
    <property type="match status" value="1"/>
</dbReference>